<reference key="1">
    <citation type="journal article" date="2009" name="Infect. Immun.">
        <title>Comparative genomics reveal extensive transposon-mediated genomic plasticity and diversity among potential effector proteins within the genus Coxiella.</title>
        <authorList>
            <person name="Beare P.A."/>
            <person name="Unsworth N."/>
            <person name="Andoh M."/>
            <person name="Voth D.E."/>
            <person name="Omsland A."/>
            <person name="Gilk S.D."/>
            <person name="Williams K.P."/>
            <person name="Sobral B.W."/>
            <person name="Kupko J.J. III"/>
            <person name="Porcella S.F."/>
            <person name="Samuel J.E."/>
            <person name="Heinzen R.A."/>
        </authorList>
    </citation>
    <scope>NUCLEOTIDE SEQUENCE [LARGE SCALE GENOMIC DNA]</scope>
    <source>
        <strain>CbuK_Q154</strain>
    </source>
</reference>
<organism>
    <name type="scientific">Coxiella burnetii (strain CbuK_Q154)</name>
    <name type="common">Coxiella burnetii (strain Q154)</name>
    <dbReference type="NCBI Taxonomy" id="434924"/>
    <lineage>
        <taxon>Bacteria</taxon>
        <taxon>Pseudomonadati</taxon>
        <taxon>Pseudomonadota</taxon>
        <taxon>Gammaproteobacteria</taxon>
        <taxon>Legionellales</taxon>
        <taxon>Coxiellaceae</taxon>
        <taxon>Coxiella</taxon>
    </lineage>
</organism>
<dbReference type="EC" id="3.1.-.-" evidence="1"/>
<dbReference type="EMBL" id="CP001020">
    <property type="protein sequence ID" value="ACJ21234.1"/>
    <property type="molecule type" value="Genomic_DNA"/>
</dbReference>
<dbReference type="RefSeq" id="WP_005769928.1">
    <property type="nucleotide sequence ID" value="NC_011528.1"/>
</dbReference>
<dbReference type="SMR" id="B6J6M4"/>
<dbReference type="KEGG" id="cbc:CbuK_2144"/>
<dbReference type="HOGENOM" id="CLU_098240_3_0_6"/>
<dbReference type="GO" id="GO:0005829">
    <property type="term" value="C:cytosol"/>
    <property type="evidence" value="ECO:0007669"/>
    <property type="project" value="TreeGrafter"/>
</dbReference>
<dbReference type="GO" id="GO:0004518">
    <property type="term" value="F:nuclease activity"/>
    <property type="evidence" value="ECO:0007669"/>
    <property type="project" value="UniProtKB-KW"/>
</dbReference>
<dbReference type="GO" id="GO:0000967">
    <property type="term" value="P:rRNA 5'-end processing"/>
    <property type="evidence" value="ECO:0007669"/>
    <property type="project" value="UniProtKB-UniRule"/>
</dbReference>
<dbReference type="CDD" id="cd16964">
    <property type="entry name" value="YqgF"/>
    <property type="match status" value="1"/>
</dbReference>
<dbReference type="Gene3D" id="3.30.420.140">
    <property type="entry name" value="YqgF/RNase H-like domain"/>
    <property type="match status" value="1"/>
</dbReference>
<dbReference type="HAMAP" id="MF_00651">
    <property type="entry name" value="Nuclease_YqgF"/>
    <property type="match status" value="1"/>
</dbReference>
<dbReference type="InterPro" id="IPR012337">
    <property type="entry name" value="RNaseH-like_sf"/>
</dbReference>
<dbReference type="InterPro" id="IPR005227">
    <property type="entry name" value="YqgF"/>
</dbReference>
<dbReference type="InterPro" id="IPR006641">
    <property type="entry name" value="YqgF/RNaseH-like_dom"/>
</dbReference>
<dbReference type="InterPro" id="IPR037027">
    <property type="entry name" value="YqgF/RNaseH-like_dom_sf"/>
</dbReference>
<dbReference type="NCBIfam" id="TIGR00250">
    <property type="entry name" value="RNAse_H_YqgF"/>
    <property type="match status" value="1"/>
</dbReference>
<dbReference type="PANTHER" id="PTHR33317">
    <property type="entry name" value="POLYNUCLEOTIDYL TRANSFERASE, RIBONUCLEASE H-LIKE SUPERFAMILY PROTEIN"/>
    <property type="match status" value="1"/>
</dbReference>
<dbReference type="PANTHER" id="PTHR33317:SF4">
    <property type="entry name" value="POLYNUCLEOTIDYL TRANSFERASE, RIBONUCLEASE H-LIKE SUPERFAMILY PROTEIN"/>
    <property type="match status" value="1"/>
</dbReference>
<dbReference type="Pfam" id="PF03652">
    <property type="entry name" value="RuvX"/>
    <property type="match status" value="1"/>
</dbReference>
<dbReference type="SMART" id="SM00732">
    <property type="entry name" value="YqgFc"/>
    <property type="match status" value="1"/>
</dbReference>
<dbReference type="SUPFAM" id="SSF53098">
    <property type="entry name" value="Ribonuclease H-like"/>
    <property type="match status" value="1"/>
</dbReference>
<keyword id="KW-0963">Cytoplasm</keyword>
<keyword id="KW-0378">Hydrolase</keyword>
<keyword id="KW-0540">Nuclease</keyword>
<keyword id="KW-0690">Ribosome biogenesis</keyword>
<feature type="chain" id="PRO_1000131017" description="Putative pre-16S rRNA nuclease">
    <location>
        <begin position="1"/>
        <end position="141"/>
    </location>
</feature>
<accession>B6J6M4</accession>
<comment type="function">
    <text evidence="1">Could be a nuclease involved in processing of the 5'-end of pre-16S rRNA.</text>
</comment>
<comment type="subcellular location">
    <subcellularLocation>
        <location evidence="1">Cytoplasm</location>
    </subcellularLocation>
</comment>
<comment type="similarity">
    <text evidence="1">Belongs to the YqgF nuclease family.</text>
</comment>
<gene>
    <name type="ordered locus">CbuK_2144</name>
</gene>
<proteinExistence type="inferred from homology"/>
<protein>
    <recommendedName>
        <fullName evidence="1">Putative pre-16S rRNA nuclease</fullName>
        <ecNumber evidence="1">3.1.-.-</ecNumber>
    </recommendedName>
</protein>
<sequence>MPNQNLIALGFDFGMKRIGVAVGQTVTHSANAIAILKAQDGVLDWEKIKMLIETWHANVLVVGIPYNMDGSEQTLTFAARKFARKLQTRFGLPLSMVDERLTTIEAKRQWYEQGLTKRPQHLDNYAAKLILEQWLQEQKNE</sequence>
<name>YQGF_COXB1</name>
<evidence type="ECO:0000255" key="1">
    <source>
        <dbReference type="HAMAP-Rule" id="MF_00651"/>
    </source>
</evidence>